<accession>B8A556</accession>
<keyword id="KW-0963">Cytoplasm</keyword>
<keyword id="KW-0326">Glycosidase</keyword>
<keyword id="KW-0378">Hydrolase</keyword>
<keyword id="KW-0546">Nucleotide metabolism</keyword>
<keyword id="KW-0539">Nucleus</keyword>
<keyword id="KW-0597">Phosphoprotein</keyword>
<keyword id="KW-1185">Reference proteome</keyword>
<feature type="chain" id="PRO_0000379457" description="5-hydroxymethyl-dUMP N-hydrolase">
    <location>
        <begin position="1"/>
        <end position="143"/>
    </location>
</feature>
<feature type="binding site" evidence="1">
    <location>
        <position position="7"/>
    </location>
    <ligand>
        <name>5-hydroxymethyl-dUMP</name>
        <dbReference type="ChEBI" id="CHEBI:90409"/>
        <note>ligand shared between homodimeric partners</note>
    </ligand>
</feature>
<feature type="binding site" evidence="1">
    <location>
        <position position="9"/>
    </location>
    <ligand>
        <name>5-hydroxymethyl-dUMP</name>
        <dbReference type="ChEBI" id="CHEBI:90409"/>
        <note>ligand shared between homodimeric partners</note>
    </ligand>
</feature>
<feature type="binding site" evidence="1">
    <location>
        <position position="10"/>
    </location>
    <ligand>
        <name>5-hydroxymethyl-dUMP</name>
        <dbReference type="ChEBI" id="CHEBI:90409"/>
        <note>ligand shared between homodimeric partners</note>
    </ligand>
</feature>
<feature type="binding site" evidence="1">
    <location>
        <position position="11"/>
    </location>
    <ligand>
        <name>5-hydroxymethyl-dUMP</name>
        <dbReference type="ChEBI" id="CHEBI:90409"/>
        <note>ligand shared between homodimeric partners</note>
    </ligand>
</feature>
<feature type="binding site" evidence="1">
    <location>
        <position position="77"/>
    </location>
    <ligand>
        <name>5-hydroxymethyl-dUMP</name>
        <dbReference type="ChEBI" id="CHEBI:90409"/>
        <note>ligand shared between homodimeric partners</note>
    </ligand>
</feature>
<feature type="binding site" evidence="1">
    <location>
        <position position="79"/>
    </location>
    <ligand>
        <name>5-hydroxymethyl-dUMP</name>
        <dbReference type="ChEBI" id="CHEBI:90409"/>
        <note>ligand shared between homodimeric partners</note>
    </ligand>
</feature>
<feature type="binding site" evidence="1">
    <location>
        <position position="83"/>
    </location>
    <ligand>
        <name>5-hydroxymethyl-dUMP</name>
        <dbReference type="ChEBI" id="CHEBI:90409"/>
        <note>ligand shared between homodimeric partners</note>
    </ligand>
</feature>
<feature type="binding site" description="in other chain" evidence="1">
    <location>
        <position position="107"/>
    </location>
    <ligand>
        <name>5-hydroxymethyl-dUMP</name>
        <dbReference type="ChEBI" id="CHEBI:90409"/>
        <note>ligand shared between homodimeric partners</note>
    </ligand>
</feature>
<organism>
    <name type="scientific">Danio rerio</name>
    <name type="common">Zebrafish</name>
    <name type="synonym">Brachydanio rerio</name>
    <dbReference type="NCBI Taxonomy" id="7955"/>
    <lineage>
        <taxon>Eukaryota</taxon>
        <taxon>Metazoa</taxon>
        <taxon>Chordata</taxon>
        <taxon>Craniata</taxon>
        <taxon>Vertebrata</taxon>
        <taxon>Euteleostomi</taxon>
        <taxon>Actinopterygii</taxon>
        <taxon>Neopterygii</taxon>
        <taxon>Teleostei</taxon>
        <taxon>Ostariophysi</taxon>
        <taxon>Cypriniformes</taxon>
        <taxon>Danionidae</taxon>
        <taxon>Danioninae</taxon>
        <taxon>Danio</taxon>
    </lineage>
</organism>
<evidence type="ECO:0000250" key="1">
    <source>
        <dbReference type="UniProtKB" id="O35820"/>
    </source>
</evidence>
<evidence type="ECO:0000250" key="2">
    <source>
        <dbReference type="UniProtKB" id="O43598"/>
    </source>
</evidence>
<evidence type="ECO:0000255" key="3">
    <source>
        <dbReference type="HAMAP-Rule" id="MF_03036"/>
    </source>
</evidence>
<dbReference type="EC" id="3.2.2.-" evidence="2"/>
<dbReference type="EMBL" id="BX510320">
    <property type="protein sequence ID" value="CAX13259.1"/>
    <property type="molecule type" value="Genomic_DNA"/>
</dbReference>
<dbReference type="RefSeq" id="NP_001156671.1">
    <property type="nucleotide sequence ID" value="NM_001163199.1"/>
</dbReference>
<dbReference type="SMR" id="B8A556"/>
<dbReference type="FunCoup" id="B8A556">
    <property type="interactions" value="1206"/>
</dbReference>
<dbReference type="STRING" id="7955.ENSDARP00000103969"/>
<dbReference type="PaxDb" id="7955-ENSDARP00000103969"/>
<dbReference type="PeptideAtlas" id="B8A556"/>
<dbReference type="Ensembl" id="ENSDART00000113060">
    <property type="protein sequence ID" value="ENSDARP00000103969"/>
    <property type="gene ID" value="ENSDARG00000075730"/>
</dbReference>
<dbReference type="GeneID" id="561810"/>
<dbReference type="KEGG" id="dre:561810"/>
<dbReference type="AGR" id="ZFIN:ZDB-GENE-081107-5"/>
<dbReference type="CTD" id="10591"/>
<dbReference type="ZFIN" id="ZDB-GENE-081107-5">
    <property type="gene designation" value="dnph1"/>
</dbReference>
<dbReference type="eggNOG" id="ENOG502S2J2">
    <property type="taxonomic scope" value="Eukaryota"/>
</dbReference>
<dbReference type="HOGENOM" id="CLU_100069_1_0_1"/>
<dbReference type="InParanoid" id="B8A556"/>
<dbReference type="OMA" id="EVLSWHV"/>
<dbReference type="OrthoDB" id="18087at2759"/>
<dbReference type="PhylomeDB" id="B8A556"/>
<dbReference type="TreeFam" id="TF329719"/>
<dbReference type="Reactome" id="R-DRE-74259">
    <property type="pathway name" value="Purine catabolism"/>
</dbReference>
<dbReference type="PRO" id="PR:B8A556"/>
<dbReference type="Proteomes" id="UP000000437">
    <property type="component" value="Chromosome 13"/>
</dbReference>
<dbReference type="Bgee" id="ENSDARG00000075730">
    <property type="expression patterns" value="Expressed in testis and 22 other cell types or tissues"/>
</dbReference>
<dbReference type="ExpressionAtlas" id="B8A556">
    <property type="expression patterns" value="baseline and differential"/>
</dbReference>
<dbReference type="GO" id="GO:0005737">
    <property type="term" value="C:cytoplasm"/>
    <property type="evidence" value="ECO:0000250"/>
    <property type="project" value="UniProtKB"/>
</dbReference>
<dbReference type="GO" id="GO:0005634">
    <property type="term" value="C:nucleus"/>
    <property type="evidence" value="ECO:0000250"/>
    <property type="project" value="UniProtKB"/>
</dbReference>
<dbReference type="GO" id="GO:0070694">
    <property type="term" value="F:5-hydroxymethyl-dUMP N-hydrolase activity"/>
    <property type="evidence" value="ECO:0000250"/>
    <property type="project" value="UniProtKB"/>
</dbReference>
<dbReference type="GO" id="GO:0009159">
    <property type="term" value="P:deoxyribonucleoside monophosphate catabolic process"/>
    <property type="evidence" value="ECO:0000250"/>
    <property type="project" value="UniProtKB"/>
</dbReference>
<dbReference type="GO" id="GO:0043174">
    <property type="term" value="P:nucleoside salvage"/>
    <property type="evidence" value="ECO:0000250"/>
    <property type="project" value="UniProtKB"/>
</dbReference>
<dbReference type="GO" id="GO:0009117">
    <property type="term" value="P:nucleotide metabolic process"/>
    <property type="evidence" value="ECO:0007669"/>
    <property type="project" value="UniProtKB-KW"/>
</dbReference>
<dbReference type="GO" id="GO:0030307">
    <property type="term" value="P:positive regulation of cell growth"/>
    <property type="evidence" value="ECO:0000250"/>
    <property type="project" value="UniProtKB"/>
</dbReference>
<dbReference type="FunFam" id="3.40.50.450:FF:000019">
    <property type="entry name" value="2'-deoxynucleoside 5'-phosphate N-hydrolase 1"/>
    <property type="match status" value="1"/>
</dbReference>
<dbReference type="Gene3D" id="3.40.50.450">
    <property type="match status" value="1"/>
</dbReference>
<dbReference type="HAMAP" id="MF_03036">
    <property type="entry name" value="Nuc_phosphate_hydrolase"/>
    <property type="match status" value="1"/>
</dbReference>
<dbReference type="InterPro" id="IPR051239">
    <property type="entry name" value="2'-dNMP_N-hydrolase"/>
</dbReference>
<dbReference type="InterPro" id="IPR028607">
    <property type="entry name" value="DNPH1"/>
</dbReference>
<dbReference type="InterPro" id="IPR007710">
    <property type="entry name" value="Nucleoside_deoxyribTrfase"/>
</dbReference>
<dbReference type="PANTHER" id="PTHR15364">
    <property type="entry name" value="2'-DEOXYNUCLEOSIDE 5'-PHOSPHATE N-HYDROLASE 1"/>
    <property type="match status" value="1"/>
</dbReference>
<dbReference type="PANTHER" id="PTHR15364:SF0">
    <property type="entry name" value="2'-DEOXYNUCLEOSIDE 5'-PHOSPHATE N-HYDROLASE 1"/>
    <property type="match status" value="1"/>
</dbReference>
<dbReference type="Pfam" id="PF05014">
    <property type="entry name" value="Nuc_deoxyrib_tr"/>
    <property type="match status" value="1"/>
</dbReference>
<dbReference type="SUPFAM" id="SSF52309">
    <property type="entry name" value="N-(deoxy)ribosyltransferase-like"/>
    <property type="match status" value="1"/>
</dbReference>
<sequence length="143" mass="16186">MNIYFCGSIRGGRQDVVIYQTIVKKLQQYGNVLTEHVSYDSLSDKGEDKDGDKAIHDRDVQWLTMSDVIVAEVTQPSLGVGYELGRAVAMNKRILCLFRPFSGKVLSAMIRGASAKPLFQVQDYKEDEVENILEEYFETLTKN</sequence>
<name>DNPH1_DANRE</name>
<comment type="function">
    <text evidence="2">Part of a nucleotide salvage pathway that eliminates epigenetically modified 5-hydroxymethyl-dCMP (hmdCMP) in a two-step process entailing deamination to cytotoxic 5-hydroxymethyl-dUMP (hmdUMP), followed by its hydrolysis into 5-hydroxymethyluracil (hmU) and 2-deoxy-D-ribose 5-phosphate (deoxyribosephosphate).</text>
</comment>
<comment type="catalytic activity">
    <reaction evidence="2">
        <text>5-hydroxymethyl-dUMP + H2O = 5-hydroxymethyluracil + 2-deoxy-D-ribose 5-phosphate</text>
        <dbReference type="Rhea" id="RHEA:77099"/>
        <dbReference type="ChEBI" id="CHEBI:15377"/>
        <dbReference type="ChEBI" id="CHEBI:16964"/>
        <dbReference type="ChEBI" id="CHEBI:62877"/>
        <dbReference type="ChEBI" id="CHEBI:90409"/>
    </reaction>
    <physiologicalReaction direction="left-to-right" evidence="2">
        <dbReference type="Rhea" id="RHEA:77100"/>
    </physiologicalReaction>
</comment>
<comment type="subunit">
    <text evidence="2">Monomer and homodimer.</text>
</comment>
<comment type="subcellular location">
    <subcellularLocation>
        <location evidence="2">Cytoplasm</location>
    </subcellularLocation>
    <subcellularLocation>
        <location evidence="2">Nucleus</location>
    </subcellularLocation>
</comment>
<comment type="similarity">
    <text evidence="3">Belongs to the 2'-deoxynucleoside 5'-phosphate N-hydrolase 1 family.</text>
</comment>
<gene>
    <name type="primary">dnph1</name>
    <name type="ORF">si:ch211-117c8.4</name>
</gene>
<protein>
    <recommendedName>
        <fullName evidence="2">5-hydroxymethyl-dUMP N-hydrolase</fullName>
        <ecNumber evidence="2">3.2.2.-</ecNumber>
    </recommendedName>
    <alternativeName>
        <fullName>2'-deoxynucleoside 5'-phosphate N-hydrolase 1</fullName>
    </alternativeName>
</protein>
<reference key="1">
    <citation type="journal article" date="2013" name="Nature">
        <title>The zebrafish reference genome sequence and its relationship to the human genome.</title>
        <authorList>
            <person name="Howe K."/>
            <person name="Clark M.D."/>
            <person name="Torroja C.F."/>
            <person name="Torrance J."/>
            <person name="Berthelot C."/>
            <person name="Muffato M."/>
            <person name="Collins J.E."/>
            <person name="Humphray S."/>
            <person name="McLaren K."/>
            <person name="Matthews L."/>
            <person name="McLaren S."/>
            <person name="Sealy I."/>
            <person name="Caccamo M."/>
            <person name="Churcher C."/>
            <person name="Scott C."/>
            <person name="Barrett J.C."/>
            <person name="Koch R."/>
            <person name="Rauch G.J."/>
            <person name="White S."/>
            <person name="Chow W."/>
            <person name="Kilian B."/>
            <person name="Quintais L.T."/>
            <person name="Guerra-Assuncao J.A."/>
            <person name="Zhou Y."/>
            <person name="Gu Y."/>
            <person name="Yen J."/>
            <person name="Vogel J.H."/>
            <person name="Eyre T."/>
            <person name="Redmond S."/>
            <person name="Banerjee R."/>
            <person name="Chi J."/>
            <person name="Fu B."/>
            <person name="Langley E."/>
            <person name="Maguire S.F."/>
            <person name="Laird G.K."/>
            <person name="Lloyd D."/>
            <person name="Kenyon E."/>
            <person name="Donaldson S."/>
            <person name="Sehra H."/>
            <person name="Almeida-King J."/>
            <person name="Loveland J."/>
            <person name="Trevanion S."/>
            <person name="Jones M."/>
            <person name="Quail M."/>
            <person name="Willey D."/>
            <person name="Hunt A."/>
            <person name="Burton J."/>
            <person name="Sims S."/>
            <person name="McLay K."/>
            <person name="Plumb B."/>
            <person name="Davis J."/>
            <person name="Clee C."/>
            <person name="Oliver K."/>
            <person name="Clark R."/>
            <person name="Riddle C."/>
            <person name="Elliot D."/>
            <person name="Threadgold G."/>
            <person name="Harden G."/>
            <person name="Ware D."/>
            <person name="Begum S."/>
            <person name="Mortimore B."/>
            <person name="Kerry G."/>
            <person name="Heath P."/>
            <person name="Phillimore B."/>
            <person name="Tracey A."/>
            <person name="Corby N."/>
            <person name="Dunn M."/>
            <person name="Johnson C."/>
            <person name="Wood J."/>
            <person name="Clark S."/>
            <person name="Pelan S."/>
            <person name="Griffiths G."/>
            <person name="Smith M."/>
            <person name="Glithero R."/>
            <person name="Howden P."/>
            <person name="Barker N."/>
            <person name="Lloyd C."/>
            <person name="Stevens C."/>
            <person name="Harley J."/>
            <person name="Holt K."/>
            <person name="Panagiotidis G."/>
            <person name="Lovell J."/>
            <person name="Beasley H."/>
            <person name="Henderson C."/>
            <person name="Gordon D."/>
            <person name="Auger K."/>
            <person name="Wright D."/>
            <person name="Collins J."/>
            <person name="Raisen C."/>
            <person name="Dyer L."/>
            <person name="Leung K."/>
            <person name="Robertson L."/>
            <person name="Ambridge K."/>
            <person name="Leongamornlert D."/>
            <person name="McGuire S."/>
            <person name="Gilderthorp R."/>
            <person name="Griffiths C."/>
            <person name="Manthravadi D."/>
            <person name="Nichol S."/>
            <person name="Barker G."/>
            <person name="Whitehead S."/>
            <person name="Kay M."/>
            <person name="Brown J."/>
            <person name="Murnane C."/>
            <person name="Gray E."/>
            <person name="Humphries M."/>
            <person name="Sycamore N."/>
            <person name="Barker D."/>
            <person name="Saunders D."/>
            <person name="Wallis J."/>
            <person name="Babbage A."/>
            <person name="Hammond S."/>
            <person name="Mashreghi-Mohammadi M."/>
            <person name="Barr L."/>
            <person name="Martin S."/>
            <person name="Wray P."/>
            <person name="Ellington A."/>
            <person name="Matthews N."/>
            <person name="Ellwood M."/>
            <person name="Woodmansey R."/>
            <person name="Clark G."/>
            <person name="Cooper J."/>
            <person name="Tromans A."/>
            <person name="Grafham D."/>
            <person name="Skuce C."/>
            <person name="Pandian R."/>
            <person name="Andrews R."/>
            <person name="Harrison E."/>
            <person name="Kimberley A."/>
            <person name="Garnett J."/>
            <person name="Fosker N."/>
            <person name="Hall R."/>
            <person name="Garner P."/>
            <person name="Kelly D."/>
            <person name="Bird C."/>
            <person name="Palmer S."/>
            <person name="Gehring I."/>
            <person name="Berger A."/>
            <person name="Dooley C.M."/>
            <person name="Ersan-Urun Z."/>
            <person name="Eser C."/>
            <person name="Geiger H."/>
            <person name="Geisler M."/>
            <person name="Karotki L."/>
            <person name="Kirn A."/>
            <person name="Konantz J."/>
            <person name="Konantz M."/>
            <person name="Oberlander M."/>
            <person name="Rudolph-Geiger S."/>
            <person name="Teucke M."/>
            <person name="Lanz C."/>
            <person name="Raddatz G."/>
            <person name="Osoegawa K."/>
            <person name="Zhu B."/>
            <person name="Rapp A."/>
            <person name="Widaa S."/>
            <person name="Langford C."/>
            <person name="Yang F."/>
            <person name="Schuster S.C."/>
            <person name="Carter N.P."/>
            <person name="Harrow J."/>
            <person name="Ning Z."/>
            <person name="Herrero J."/>
            <person name="Searle S.M."/>
            <person name="Enright A."/>
            <person name="Geisler R."/>
            <person name="Plasterk R.H."/>
            <person name="Lee C."/>
            <person name="Westerfield M."/>
            <person name="de Jong P.J."/>
            <person name="Zon L.I."/>
            <person name="Postlethwait J.H."/>
            <person name="Nusslein-Volhard C."/>
            <person name="Hubbard T.J."/>
            <person name="Roest Crollius H."/>
            <person name="Rogers J."/>
            <person name="Stemple D.L."/>
        </authorList>
    </citation>
    <scope>NUCLEOTIDE SEQUENCE [LARGE SCALE GENOMIC DNA]</scope>
    <source>
        <strain>Tuebingen</strain>
    </source>
</reference>
<proteinExistence type="inferred from homology"/>